<keyword id="KW-0961">Cell wall biogenesis/degradation</keyword>
<keyword id="KW-0256">Endoplasmic reticulum</keyword>
<keyword id="KW-0472">Membrane</keyword>
<keyword id="KW-0653">Protein transport</keyword>
<keyword id="KW-1185">Reference proteome</keyword>
<keyword id="KW-0812">Transmembrane</keyword>
<keyword id="KW-1133">Transmembrane helix</keyword>
<keyword id="KW-0813">Transport</keyword>
<reference key="1">
    <citation type="journal article" date="2004" name="Nature">
        <title>Genome evolution in yeasts.</title>
        <authorList>
            <person name="Dujon B."/>
            <person name="Sherman D."/>
            <person name="Fischer G."/>
            <person name="Durrens P."/>
            <person name="Casaregola S."/>
            <person name="Lafontaine I."/>
            <person name="de Montigny J."/>
            <person name="Marck C."/>
            <person name="Neuveglise C."/>
            <person name="Talla E."/>
            <person name="Goffard N."/>
            <person name="Frangeul L."/>
            <person name="Aigle M."/>
            <person name="Anthouard V."/>
            <person name="Babour A."/>
            <person name="Barbe V."/>
            <person name="Barnay S."/>
            <person name="Blanchin S."/>
            <person name="Beckerich J.-M."/>
            <person name="Beyne E."/>
            <person name="Bleykasten C."/>
            <person name="Boisrame A."/>
            <person name="Boyer J."/>
            <person name="Cattolico L."/>
            <person name="Confanioleri F."/>
            <person name="de Daruvar A."/>
            <person name="Despons L."/>
            <person name="Fabre E."/>
            <person name="Fairhead C."/>
            <person name="Ferry-Dumazet H."/>
            <person name="Groppi A."/>
            <person name="Hantraye F."/>
            <person name="Hennequin C."/>
            <person name="Jauniaux N."/>
            <person name="Joyet P."/>
            <person name="Kachouri R."/>
            <person name="Kerrest A."/>
            <person name="Koszul R."/>
            <person name="Lemaire M."/>
            <person name="Lesur I."/>
            <person name="Ma L."/>
            <person name="Muller H."/>
            <person name="Nicaud J.-M."/>
            <person name="Nikolski M."/>
            <person name="Oztas S."/>
            <person name="Ozier-Kalogeropoulos O."/>
            <person name="Pellenz S."/>
            <person name="Potier S."/>
            <person name="Richard G.-F."/>
            <person name="Straub M.-L."/>
            <person name="Suleau A."/>
            <person name="Swennen D."/>
            <person name="Tekaia F."/>
            <person name="Wesolowski-Louvel M."/>
            <person name="Westhof E."/>
            <person name="Wirth B."/>
            <person name="Zeniou-Meyer M."/>
            <person name="Zivanovic Y."/>
            <person name="Bolotin-Fukuhara M."/>
            <person name="Thierry A."/>
            <person name="Bouchier C."/>
            <person name="Caudron B."/>
            <person name="Scarpelli C."/>
            <person name="Gaillardin C."/>
            <person name="Weissenbach J."/>
            <person name="Wincker P."/>
            <person name="Souciet J.-L."/>
        </authorList>
    </citation>
    <scope>NUCLEOTIDE SEQUENCE [LARGE SCALE GENOMIC DNA]</scope>
    <source>
        <strain>ATCC 36239 / CBS 767 / BCRC 21394 / JCM 1990 / NBRC 0083 / IGC 2968</strain>
    </source>
</reference>
<proteinExistence type="inferred from homology"/>
<protein>
    <recommendedName>
        <fullName>Chitin synthase export chaperone</fullName>
    </recommendedName>
</protein>
<name>CHS7_DEBHA</name>
<organism>
    <name type="scientific">Debaryomyces hansenii (strain ATCC 36239 / CBS 767 / BCRC 21394 / JCM 1990 / NBRC 0083 / IGC 2968)</name>
    <name type="common">Yeast</name>
    <name type="synonym">Torulaspora hansenii</name>
    <dbReference type="NCBI Taxonomy" id="284592"/>
    <lineage>
        <taxon>Eukaryota</taxon>
        <taxon>Fungi</taxon>
        <taxon>Dikarya</taxon>
        <taxon>Ascomycota</taxon>
        <taxon>Saccharomycotina</taxon>
        <taxon>Pichiomycetes</taxon>
        <taxon>Debaryomycetaceae</taxon>
        <taxon>Debaryomyces</taxon>
    </lineage>
</organism>
<accession>Q6BUS8</accession>
<gene>
    <name type="primary">CHS7</name>
    <name type="ordered locus">DEHA2C08360g</name>
</gene>
<dbReference type="EMBL" id="CR382135">
    <property type="protein sequence ID" value="CAG86108.1"/>
    <property type="molecule type" value="Genomic_DNA"/>
</dbReference>
<dbReference type="RefSeq" id="XP_458041.1">
    <property type="nucleotide sequence ID" value="XM_458041.1"/>
</dbReference>
<dbReference type="SMR" id="Q6BUS8"/>
<dbReference type="FunCoup" id="Q6BUS8">
    <property type="interactions" value="62"/>
</dbReference>
<dbReference type="STRING" id="284592.Q6BUS8"/>
<dbReference type="GeneID" id="2899992"/>
<dbReference type="KEGG" id="dha:DEHA2C08360g"/>
<dbReference type="VEuPathDB" id="FungiDB:DEHA2C08360g"/>
<dbReference type="eggNOG" id="ENOG502QRVH">
    <property type="taxonomic scope" value="Eukaryota"/>
</dbReference>
<dbReference type="HOGENOM" id="CLU_050424_1_1_1"/>
<dbReference type="InParanoid" id="Q6BUS8"/>
<dbReference type="OMA" id="TVWEVKD"/>
<dbReference type="OrthoDB" id="2189463at2759"/>
<dbReference type="Proteomes" id="UP000000599">
    <property type="component" value="Chromosome C"/>
</dbReference>
<dbReference type="GO" id="GO:0005789">
    <property type="term" value="C:endoplasmic reticulum membrane"/>
    <property type="evidence" value="ECO:0007669"/>
    <property type="project" value="UniProtKB-SubCell"/>
</dbReference>
<dbReference type="GO" id="GO:0051082">
    <property type="term" value="F:unfolded protein binding"/>
    <property type="evidence" value="ECO:0007669"/>
    <property type="project" value="TreeGrafter"/>
</dbReference>
<dbReference type="GO" id="GO:0071555">
    <property type="term" value="P:cell wall organization"/>
    <property type="evidence" value="ECO:0007669"/>
    <property type="project" value="UniProtKB-KW"/>
</dbReference>
<dbReference type="GO" id="GO:0006457">
    <property type="term" value="P:protein folding"/>
    <property type="evidence" value="ECO:0007669"/>
    <property type="project" value="TreeGrafter"/>
</dbReference>
<dbReference type="GO" id="GO:0015031">
    <property type="term" value="P:protein transport"/>
    <property type="evidence" value="ECO:0007669"/>
    <property type="project" value="UniProtKB-KW"/>
</dbReference>
<dbReference type="InterPro" id="IPR022057">
    <property type="entry name" value="Chs7"/>
</dbReference>
<dbReference type="PANTHER" id="PTHR35329">
    <property type="entry name" value="CHITIN SYNTHASE EXPORT CHAPERONE"/>
    <property type="match status" value="1"/>
</dbReference>
<dbReference type="PANTHER" id="PTHR35329:SF2">
    <property type="entry name" value="CHITIN SYNTHASE EXPORT CHAPERONE"/>
    <property type="match status" value="1"/>
</dbReference>
<dbReference type="Pfam" id="PF12271">
    <property type="entry name" value="Chs7"/>
    <property type="match status" value="1"/>
</dbReference>
<feature type="chain" id="PRO_0000280576" description="Chitin synthase export chaperone">
    <location>
        <begin position="1"/>
        <end position="309"/>
    </location>
</feature>
<feature type="transmembrane region" description="Helical" evidence="2">
    <location>
        <begin position="51"/>
        <end position="71"/>
    </location>
</feature>
<feature type="transmembrane region" description="Helical" evidence="2">
    <location>
        <begin position="86"/>
        <end position="106"/>
    </location>
</feature>
<feature type="transmembrane region" description="Helical" evidence="2">
    <location>
        <begin position="114"/>
        <end position="134"/>
    </location>
</feature>
<feature type="transmembrane region" description="Helical" evidence="2">
    <location>
        <begin position="156"/>
        <end position="176"/>
    </location>
</feature>
<feature type="transmembrane region" description="Helical" evidence="2">
    <location>
        <begin position="194"/>
        <end position="214"/>
    </location>
</feature>
<feature type="transmembrane region" description="Helical" evidence="2">
    <location>
        <begin position="218"/>
        <end position="238"/>
    </location>
</feature>
<feature type="transmembrane region" description="Helical" evidence="2">
    <location>
        <begin position="251"/>
        <end position="271"/>
    </location>
</feature>
<evidence type="ECO:0000250" key="1"/>
<evidence type="ECO:0000255" key="2"/>
<evidence type="ECO:0000305" key="3"/>
<sequence>MAFGNFDTICNITSLPLCSVVGSVNETSYFTRGIVPDCYARSVELANTMVFQIGNAFVHFGGLIILLIIIFNVRAKYTAIGRTEMLFFFYLIICLIVSSLVVDCGVSPPSSGSYAYFVAVQLGLASASCICILYNGLLCFQFWEDGSRKSMWSLRVICFCWFVVNFIVALVTFKSWDSALDSRKTMAMFVITYLINAIILAFYVISQIVLVVFALDSYWPLGAILLGVFFFVAGQVLTYEFSDDICRGASHYIDGLFFGSACNIFTVMMIYKFWDMITVDDLEFSVANVEHGVTAFGGDDEKRGSTIFS</sequence>
<comment type="function">
    <text evidence="1">Chaperone required for the export of the chitin synthase CHS3 from the endoplasmic reticulum.</text>
</comment>
<comment type="subunit">
    <text evidence="1">Interacts with CHS3.</text>
</comment>
<comment type="subcellular location">
    <subcellularLocation>
        <location evidence="1">Endoplasmic reticulum membrane</location>
        <topology evidence="1">Multi-pass membrane protein</topology>
    </subcellularLocation>
</comment>
<comment type="similarity">
    <text evidence="3">Belongs to the CHS7 family.</text>
</comment>